<organism>
    <name type="scientific">Danio rerio</name>
    <name type="common">Zebrafish</name>
    <name type="synonym">Brachydanio rerio</name>
    <dbReference type="NCBI Taxonomy" id="7955"/>
    <lineage>
        <taxon>Eukaryota</taxon>
        <taxon>Metazoa</taxon>
        <taxon>Chordata</taxon>
        <taxon>Craniata</taxon>
        <taxon>Vertebrata</taxon>
        <taxon>Euteleostomi</taxon>
        <taxon>Actinopterygii</taxon>
        <taxon>Neopterygii</taxon>
        <taxon>Teleostei</taxon>
        <taxon>Ostariophysi</taxon>
        <taxon>Cypriniformes</taxon>
        <taxon>Danionidae</taxon>
        <taxon>Danioninae</taxon>
        <taxon>Danio</taxon>
    </lineage>
</organism>
<reference key="1">
    <citation type="journal article" date="2003" name="Proc. Natl. Acad. Sci. U.S.A.">
        <title>Identification, classification, and partial characterization of genes in humans and other vertebrates homologous to a fish membrane progestin receptor.</title>
        <authorList>
            <person name="Zhu Y."/>
            <person name="Bond J."/>
            <person name="Thomas P."/>
        </authorList>
    </citation>
    <scope>NUCLEOTIDE SEQUENCE [MRNA]</scope>
    <source>
        <tissue>Ovary</tissue>
    </source>
</reference>
<reference key="2">
    <citation type="journal article" date="2003" name="Proc. Natl. Acad. Sci. U.S.A.">
        <title>Cloning, expression, and characterization of a membrane progestin receptor and evidence it is an intermediary in meiotic maturation of fish oocytes.</title>
        <authorList>
            <person name="Zhu Y."/>
            <person name="Rice C.D."/>
            <person name="Pang Y."/>
            <person name="Pace M."/>
            <person name="Thomas P."/>
        </authorList>
    </citation>
    <scope>FUNCTION IN MEIOTIC MATURATION</scope>
</reference>
<reference key="3">
    <citation type="journal article" date="2005" name="Gen. Comp. Endocrinol.">
        <title>Membrane-bound progestin receptors in channel catfish and zebrafish ovary: changes in gene expression associated with the reproductive cycles and hormonal reagents.</title>
        <authorList>
            <person name="Kazeto Y."/>
            <person name="Goto-Kazeto R."/>
            <person name="Trant J.M."/>
        </authorList>
    </citation>
    <scope>DEVELOPMENTAL STAGE</scope>
</reference>
<reference key="4">
    <citation type="journal article" date="2006" name="J. Endocrinol.">
        <title>Cell-surface expression, progestin binding, and rapid nongenomic signaling of zebrafish membrane progestin receptors alpha and beta in transfected cells.</title>
        <authorList>
            <person name="Hanna R."/>
            <person name="Pang Y."/>
            <person name="Thomas P."/>
            <person name="Zhu Y."/>
        </authorList>
    </citation>
    <scope>FUNCTION</scope>
    <scope>STEROID BINDING</scope>
    <scope>SUBCELLULAR LOCATION</scope>
</reference>
<dbReference type="EMBL" id="AY149121">
    <property type="protein sequence ID" value="AAN78115.1"/>
    <property type="molecule type" value="mRNA"/>
</dbReference>
<dbReference type="RefSeq" id="NP_899188.1">
    <property type="nucleotide sequence ID" value="NM_183345.1"/>
</dbReference>
<dbReference type="RefSeq" id="XP_005158387.1">
    <property type="nucleotide sequence ID" value="XM_005158330.5"/>
</dbReference>
<dbReference type="SMR" id="Q801G2"/>
<dbReference type="FunCoup" id="Q801G2">
    <property type="interactions" value="28"/>
</dbReference>
<dbReference type="STRING" id="7955.ENSDARP00000043290"/>
<dbReference type="PaxDb" id="7955-ENSDARP00000043290"/>
<dbReference type="Ensembl" id="ENSDART00000043291">
    <property type="protein sequence ID" value="ENSDARP00000043290"/>
    <property type="gene ID" value="ENSDARG00000034907"/>
</dbReference>
<dbReference type="Ensembl" id="ENSDART00000144069">
    <property type="protein sequence ID" value="ENSDARP00000112552"/>
    <property type="gene ID" value="ENSDARG00000034907"/>
</dbReference>
<dbReference type="GeneID" id="368256"/>
<dbReference type="KEGG" id="dre:368256"/>
<dbReference type="AGR" id="ZFIN:ZDB-GENE-030728-2"/>
<dbReference type="CTD" id="368256"/>
<dbReference type="ZFIN" id="ZDB-GENE-030728-2">
    <property type="gene designation" value="paqr7b"/>
</dbReference>
<dbReference type="eggNOG" id="KOG0748">
    <property type="taxonomic scope" value="Eukaryota"/>
</dbReference>
<dbReference type="HOGENOM" id="CLU_052356_0_0_1"/>
<dbReference type="InParanoid" id="Q801G2"/>
<dbReference type="OMA" id="FIFTTCC"/>
<dbReference type="OrthoDB" id="535992at2759"/>
<dbReference type="PhylomeDB" id="Q801G2"/>
<dbReference type="TreeFam" id="TF319738"/>
<dbReference type="PRO" id="PR:Q801G2"/>
<dbReference type="Proteomes" id="UP000000437">
    <property type="component" value="Chromosome 16"/>
</dbReference>
<dbReference type="Bgee" id="ENSDARG00000034907">
    <property type="expression patterns" value="Expressed in brain and 10 other cell types or tissues"/>
</dbReference>
<dbReference type="ExpressionAtlas" id="Q801G2">
    <property type="expression patterns" value="baseline"/>
</dbReference>
<dbReference type="GO" id="GO:0005886">
    <property type="term" value="C:plasma membrane"/>
    <property type="evidence" value="ECO:0000314"/>
    <property type="project" value="ZFIN"/>
</dbReference>
<dbReference type="GO" id="GO:0003707">
    <property type="term" value="F:nuclear steroid receptor activity"/>
    <property type="evidence" value="ECO:0000314"/>
    <property type="project" value="UniProtKB"/>
</dbReference>
<dbReference type="GO" id="GO:0005496">
    <property type="term" value="F:steroid binding"/>
    <property type="evidence" value="ECO:0000314"/>
    <property type="project" value="ZFIN"/>
</dbReference>
<dbReference type="GO" id="GO:0007193">
    <property type="term" value="P:adenylate cyclase-inhibiting G protein-coupled receptor signaling pathway"/>
    <property type="evidence" value="ECO:0000314"/>
    <property type="project" value="UniProtKB"/>
</dbReference>
<dbReference type="GO" id="GO:0001556">
    <property type="term" value="P:oocyte maturation"/>
    <property type="evidence" value="ECO:0000315"/>
    <property type="project" value="ZFIN"/>
</dbReference>
<dbReference type="GO" id="GO:0043410">
    <property type="term" value="P:positive regulation of MAPK cascade"/>
    <property type="evidence" value="ECO:0000314"/>
    <property type="project" value="UniProtKB"/>
</dbReference>
<dbReference type="GO" id="GO:0048545">
    <property type="term" value="P:response to steroid hormone"/>
    <property type="evidence" value="ECO:0000314"/>
    <property type="project" value="ZFIN"/>
</dbReference>
<dbReference type="GO" id="GO:0007165">
    <property type="term" value="P:signal transduction"/>
    <property type="evidence" value="ECO:0000314"/>
    <property type="project" value="ZFIN"/>
</dbReference>
<dbReference type="GO" id="GO:0043401">
    <property type="term" value="P:steroid hormone receptor signaling pathway"/>
    <property type="evidence" value="ECO:0000314"/>
    <property type="project" value="UniProtKB"/>
</dbReference>
<dbReference type="InterPro" id="IPR004254">
    <property type="entry name" value="AdipoR/HlyIII-related"/>
</dbReference>
<dbReference type="PANTHER" id="PTHR20855">
    <property type="entry name" value="ADIPOR/PROGESTIN RECEPTOR-RELATED"/>
    <property type="match status" value="1"/>
</dbReference>
<dbReference type="PANTHER" id="PTHR20855:SF41">
    <property type="entry name" value="MEMBRANE PROGESTIN RECEPTOR ALPHA"/>
    <property type="match status" value="1"/>
</dbReference>
<dbReference type="Pfam" id="PF03006">
    <property type="entry name" value="HlyIII"/>
    <property type="match status" value="1"/>
</dbReference>
<sequence>MATVVMEQIGRLFINAQQLRQIPRFLESAFPKLPCTVMVSDVPWVFRESHIITGYRPPDQNWRYYFLTLFQRHNESVNVWTHLLASLIILVKFQELSETVDFLRDPHAQPMFILLLAAFTYLGCSALAHLLSAKSEISHYTFYFLDYVGVAVYQYGSALAHFYYVVEEEWHAQVRTFFLPASAFLAWLSCTGCCYGKYASPKLPKFVHKLFQVVPSGLAYCLDISPVLHRIYRCYSSEHWCADQAVVYHCYQVLFFLISAYFFSYPHPERWFPGRCDFIGQGHQIFHVFLVLCTLVQIEAVRLDYTERRRLYEHLHGDLAHDAVALFIFTACCSALTAFYVRKRVKTYLEEKQE</sequence>
<protein>
    <recommendedName>
        <fullName>Membrane progestin receptor alpha-B</fullName>
        <shortName>mPR alpha</shortName>
    </recommendedName>
    <alternativeName>
        <fullName>Progestin and adipoQ receptor family member VII, b</fullName>
    </alternativeName>
</protein>
<gene>
    <name type="primary">paqr7b</name>
    <name type="synonym">mpra</name>
    <name type="synonym">paqr7</name>
</gene>
<name>MPRAB_DANRE</name>
<accession>Q801G2</accession>
<evidence type="ECO:0000255" key="1"/>
<evidence type="ECO:0000269" key="2">
    <source>
    </source>
</evidence>
<evidence type="ECO:0000269" key="3">
    <source>
    </source>
</evidence>
<evidence type="ECO:0000269" key="4">
    <source>
    </source>
</evidence>
<evidence type="ECO:0000305" key="5"/>
<proteinExistence type="evidence at protein level"/>
<feature type="chain" id="PRO_0000218838" description="Membrane progestin receptor alpha-B">
    <location>
        <begin position="1"/>
        <end position="354"/>
    </location>
</feature>
<feature type="topological domain" description="Cytoplasmic" evidence="1">
    <location>
        <begin position="1"/>
        <end position="76"/>
    </location>
</feature>
<feature type="transmembrane region" description="Helical; Name=1" evidence="1">
    <location>
        <begin position="77"/>
        <end position="97"/>
    </location>
</feature>
<feature type="topological domain" description="Extracellular" evidence="1">
    <location>
        <begin position="98"/>
        <end position="110"/>
    </location>
</feature>
<feature type="transmembrane region" description="Helical; Name=2" evidence="1">
    <location>
        <begin position="111"/>
        <end position="131"/>
    </location>
</feature>
<feature type="topological domain" description="Cytoplasmic" evidence="1">
    <location>
        <begin position="132"/>
        <end position="141"/>
    </location>
</feature>
<feature type="transmembrane region" description="Helical; Name=3" evidence="1">
    <location>
        <begin position="142"/>
        <end position="162"/>
    </location>
</feature>
<feature type="topological domain" description="Extracellular" evidence="1">
    <location>
        <begin position="163"/>
        <end position="175"/>
    </location>
</feature>
<feature type="transmembrane region" description="Helical; Name=4" evidence="1">
    <location>
        <begin position="176"/>
        <end position="196"/>
    </location>
</feature>
<feature type="topological domain" description="Cytoplasmic" evidence="1">
    <location>
        <begin position="197"/>
        <end position="244"/>
    </location>
</feature>
<feature type="transmembrane region" description="Helical; Name=5" evidence="1">
    <location>
        <begin position="245"/>
        <end position="265"/>
    </location>
</feature>
<feature type="topological domain" description="Extracellular" evidence="1">
    <location>
        <begin position="266"/>
        <end position="277"/>
    </location>
</feature>
<feature type="transmembrane region" description="Helical; Name=6" evidence="1">
    <location>
        <begin position="278"/>
        <end position="298"/>
    </location>
</feature>
<feature type="topological domain" description="Cytoplasmic" evidence="1">
    <location>
        <begin position="299"/>
        <end position="318"/>
    </location>
</feature>
<feature type="transmembrane region" description="Helical; Name=7" evidence="1">
    <location>
        <begin position="319"/>
        <end position="339"/>
    </location>
</feature>
<feature type="topological domain" description="Extracellular" evidence="1">
    <location>
        <begin position="340"/>
        <end position="354"/>
    </location>
</feature>
<comment type="function">
    <text evidence="2 4">Steroid membrane receptor. Signals upon progestin binding, resulting in rapid activation of MAPK and down-regulation of adenylyl cyclase activity. Interacts with steroids with varying degrees of affinity, showing specificity for activation by the maturation-inducing steroid (MIS) 4-pregnen-17,20beta-diol-3-one (17,20beta-DHP). Capable of mediating progestin-induced oocyte maturation.</text>
</comment>
<comment type="subcellular location">
    <subcellularLocation>
        <location evidence="4">Cell membrane</location>
        <topology evidence="4">Multi-pass membrane protein</topology>
    </subcellularLocation>
</comment>
<comment type="developmental stage">
    <text evidence="3">In oocytes, expression is lowest in ovarian follicles at stages I and II but gradually increases after the onset of vitellogenic growth, peaking at vitellogenic stages (stage IIIB).</text>
</comment>
<comment type="similarity">
    <text evidence="5">Belongs to the ADIPOR family.</text>
</comment>
<keyword id="KW-1003">Cell membrane</keyword>
<keyword id="KW-0217">Developmental protein</keyword>
<keyword id="KW-0221">Differentiation</keyword>
<keyword id="KW-0446">Lipid-binding</keyword>
<keyword id="KW-0472">Membrane</keyword>
<keyword id="KW-0896">Oogenesis</keyword>
<keyword id="KW-0675">Receptor</keyword>
<keyword id="KW-1185">Reference proteome</keyword>
<keyword id="KW-0754">Steroid-binding</keyword>
<keyword id="KW-0812">Transmembrane</keyword>
<keyword id="KW-1133">Transmembrane helix</keyword>